<organism>
    <name type="scientific">Paraburkholderia phymatum (strain DSM 17167 / CIP 108236 / LMG 21445 / STM815)</name>
    <name type="common">Burkholderia phymatum</name>
    <dbReference type="NCBI Taxonomy" id="391038"/>
    <lineage>
        <taxon>Bacteria</taxon>
        <taxon>Pseudomonadati</taxon>
        <taxon>Pseudomonadota</taxon>
        <taxon>Betaproteobacteria</taxon>
        <taxon>Burkholderiales</taxon>
        <taxon>Burkholderiaceae</taxon>
        <taxon>Paraburkholderia</taxon>
    </lineage>
</organism>
<gene>
    <name evidence="1" type="primary">secA</name>
    <name type="ordered locus">Bphy_2664</name>
</gene>
<accession>B2JHF1</accession>
<name>SECA_PARP8</name>
<evidence type="ECO:0000255" key="1">
    <source>
        <dbReference type="HAMAP-Rule" id="MF_01382"/>
    </source>
</evidence>
<reference key="1">
    <citation type="journal article" date="2014" name="Stand. Genomic Sci.">
        <title>Complete genome sequence of Burkholderia phymatum STM815(T), a broad host range and efficient nitrogen-fixing symbiont of Mimosa species.</title>
        <authorList>
            <person name="Moulin L."/>
            <person name="Klonowska A."/>
            <person name="Caroline B."/>
            <person name="Booth K."/>
            <person name="Vriezen J.A."/>
            <person name="Melkonian R."/>
            <person name="James E.K."/>
            <person name="Young J.P."/>
            <person name="Bena G."/>
            <person name="Hauser L."/>
            <person name="Land M."/>
            <person name="Kyrpides N."/>
            <person name="Bruce D."/>
            <person name="Chain P."/>
            <person name="Copeland A."/>
            <person name="Pitluck S."/>
            <person name="Woyke T."/>
            <person name="Lizotte-Waniewski M."/>
            <person name="Bristow J."/>
            <person name="Riley M."/>
        </authorList>
    </citation>
    <scope>NUCLEOTIDE SEQUENCE [LARGE SCALE GENOMIC DNA]</scope>
    <source>
        <strain>DSM 17167 / CIP 108236 / LMG 21445 / STM815</strain>
    </source>
</reference>
<feature type="chain" id="PRO_1000144985" description="Protein translocase subunit SecA">
    <location>
        <begin position="1"/>
        <end position="936"/>
    </location>
</feature>
<feature type="binding site" evidence="1">
    <location>
        <position position="87"/>
    </location>
    <ligand>
        <name>ATP</name>
        <dbReference type="ChEBI" id="CHEBI:30616"/>
    </ligand>
</feature>
<feature type="binding site" evidence="1">
    <location>
        <begin position="105"/>
        <end position="109"/>
    </location>
    <ligand>
        <name>ATP</name>
        <dbReference type="ChEBI" id="CHEBI:30616"/>
    </ligand>
</feature>
<feature type="binding site" evidence="1">
    <location>
        <position position="515"/>
    </location>
    <ligand>
        <name>ATP</name>
        <dbReference type="ChEBI" id="CHEBI:30616"/>
    </ligand>
</feature>
<feature type="binding site" evidence="1">
    <location>
        <position position="920"/>
    </location>
    <ligand>
        <name>Zn(2+)</name>
        <dbReference type="ChEBI" id="CHEBI:29105"/>
    </ligand>
</feature>
<feature type="binding site" evidence="1">
    <location>
        <position position="922"/>
    </location>
    <ligand>
        <name>Zn(2+)</name>
        <dbReference type="ChEBI" id="CHEBI:29105"/>
    </ligand>
</feature>
<feature type="binding site" evidence="1">
    <location>
        <position position="931"/>
    </location>
    <ligand>
        <name>Zn(2+)</name>
        <dbReference type="ChEBI" id="CHEBI:29105"/>
    </ligand>
</feature>
<feature type="binding site" evidence="1">
    <location>
        <position position="932"/>
    </location>
    <ligand>
        <name>Zn(2+)</name>
        <dbReference type="ChEBI" id="CHEBI:29105"/>
    </ligand>
</feature>
<comment type="function">
    <text evidence="1">Part of the Sec protein translocase complex. Interacts with the SecYEG preprotein conducting channel. Has a central role in coupling the hydrolysis of ATP to the transfer of proteins into and across the cell membrane, serving both as a receptor for the preprotein-SecB complex and as an ATP-driven molecular motor driving the stepwise translocation of polypeptide chains across the membrane.</text>
</comment>
<comment type="catalytic activity">
    <reaction evidence="1">
        <text>ATP + H2O + cellular proteinSide 1 = ADP + phosphate + cellular proteinSide 2.</text>
        <dbReference type="EC" id="7.4.2.8"/>
    </reaction>
</comment>
<comment type="cofactor">
    <cofactor evidence="1">
        <name>Zn(2+)</name>
        <dbReference type="ChEBI" id="CHEBI:29105"/>
    </cofactor>
    <text evidence="1">May bind 1 zinc ion per subunit.</text>
</comment>
<comment type="subunit">
    <text evidence="1">Monomer and homodimer. Part of the essential Sec protein translocation apparatus which comprises SecA, SecYEG and auxiliary proteins SecDF-YajC and YidC.</text>
</comment>
<comment type="subcellular location">
    <subcellularLocation>
        <location evidence="1">Cell inner membrane</location>
        <topology evidence="1">Peripheral membrane protein</topology>
        <orientation evidence="1">Cytoplasmic side</orientation>
    </subcellularLocation>
    <subcellularLocation>
        <location evidence="1">Cytoplasm</location>
    </subcellularLocation>
    <text evidence="1">Distribution is 50-50.</text>
</comment>
<comment type="similarity">
    <text evidence="1">Belongs to the SecA family.</text>
</comment>
<dbReference type="EC" id="7.4.2.8" evidence="1"/>
<dbReference type="EMBL" id="CP001043">
    <property type="protein sequence ID" value="ACC71836.1"/>
    <property type="molecule type" value="Genomic_DNA"/>
</dbReference>
<dbReference type="RefSeq" id="WP_012402036.1">
    <property type="nucleotide sequence ID" value="NC_010622.1"/>
</dbReference>
<dbReference type="SMR" id="B2JHF1"/>
<dbReference type="STRING" id="391038.Bphy_2664"/>
<dbReference type="KEGG" id="bph:Bphy_2664"/>
<dbReference type="eggNOG" id="COG0653">
    <property type="taxonomic scope" value="Bacteria"/>
</dbReference>
<dbReference type="HOGENOM" id="CLU_005314_3_0_4"/>
<dbReference type="OrthoDB" id="9805579at2"/>
<dbReference type="Proteomes" id="UP000001192">
    <property type="component" value="Chromosome 1"/>
</dbReference>
<dbReference type="GO" id="GO:0031522">
    <property type="term" value="C:cell envelope Sec protein transport complex"/>
    <property type="evidence" value="ECO:0007669"/>
    <property type="project" value="TreeGrafter"/>
</dbReference>
<dbReference type="GO" id="GO:0005829">
    <property type="term" value="C:cytosol"/>
    <property type="evidence" value="ECO:0007669"/>
    <property type="project" value="TreeGrafter"/>
</dbReference>
<dbReference type="GO" id="GO:0005886">
    <property type="term" value="C:plasma membrane"/>
    <property type="evidence" value="ECO:0007669"/>
    <property type="project" value="UniProtKB-SubCell"/>
</dbReference>
<dbReference type="GO" id="GO:0005524">
    <property type="term" value="F:ATP binding"/>
    <property type="evidence" value="ECO:0007669"/>
    <property type="project" value="UniProtKB-UniRule"/>
</dbReference>
<dbReference type="GO" id="GO:0046872">
    <property type="term" value="F:metal ion binding"/>
    <property type="evidence" value="ECO:0007669"/>
    <property type="project" value="UniProtKB-KW"/>
</dbReference>
<dbReference type="GO" id="GO:0008564">
    <property type="term" value="F:protein-exporting ATPase activity"/>
    <property type="evidence" value="ECO:0007669"/>
    <property type="project" value="UniProtKB-EC"/>
</dbReference>
<dbReference type="GO" id="GO:0065002">
    <property type="term" value="P:intracellular protein transmembrane transport"/>
    <property type="evidence" value="ECO:0007669"/>
    <property type="project" value="UniProtKB-UniRule"/>
</dbReference>
<dbReference type="GO" id="GO:0017038">
    <property type="term" value="P:protein import"/>
    <property type="evidence" value="ECO:0007669"/>
    <property type="project" value="InterPro"/>
</dbReference>
<dbReference type="GO" id="GO:0006605">
    <property type="term" value="P:protein targeting"/>
    <property type="evidence" value="ECO:0007669"/>
    <property type="project" value="UniProtKB-UniRule"/>
</dbReference>
<dbReference type="GO" id="GO:0043952">
    <property type="term" value="P:protein transport by the Sec complex"/>
    <property type="evidence" value="ECO:0007669"/>
    <property type="project" value="TreeGrafter"/>
</dbReference>
<dbReference type="CDD" id="cd17928">
    <property type="entry name" value="DEXDc_SecA"/>
    <property type="match status" value="1"/>
</dbReference>
<dbReference type="CDD" id="cd18803">
    <property type="entry name" value="SF2_C_secA"/>
    <property type="match status" value="1"/>
</dbReference>
<dbReference type="FunFam" id="3.40.50.300:FF:000081">
    <property type="entry name" value="Preprotein translocase subunit SecA"/>
    <property type="match status" value="1"/>
</dbReference>
<dbReference type="FunFam" id="3.40.50.300:FF:000113">
    <property type="entry name" value="Preprotein translocase subunit SecA"/>
    <property type="match status" value="1"/>
</dbReference>
<dbReference type="FunFam" id="3.90.1440.10:FF:000001">
    <property type="entry name" value="Preprotein translocase subunit SecA"/>
    <property type="match status" value="1"/>
</dbReference>
<dbReference type="FunFam" id="1.10.3060.10:FF:000003">
    <property type="entry name" value="Protein translocase subunit SecA"/>
    <property type="match status" value="1"/>
</dbReference>
<dbReference type="Gene3D" id="1.10.3060.10">
    <property type="entry name" value="Helical scaffold and wing domains of SecA"/>
    <property type="match status" value="1"/>
</dbReference>
<dbReference type="Gene3D" id="3.40.50.300">
    <property type="entry name" value="P-loop containing nucleotide triphosphate hydrolases"/>
    <property type="match status" value="2"/>
</dbReference>
<dbReference type="Gene3D" id="3.90.1440.10">
    <property type="entry name" value="SecA, preprotein cross-linking domain"/>
    <property type="match status" value="1"/>
</dbReference>
<dbReference type="HAMAP" id="MF_01382">
    <property type="entry name" value="SecA"/>
    <property type="match status" value="1"/>
</dbReference>
<dbReference type="InterPro" id="IPR014001">
    <property type="entry name" value="Helicase_ATP-bd"/>
</dbReference>
<dbReference type="InterPro" id="IPR001650">
    <property type="entry name" value="Helicase_C-like"/>
</dbReference>
<dbReference type="InterPro" id="IPR027417">
    <property type="entry name" value="P-loop_NTPase"/>
</dbReference>
<dbReference type="InterPro" id="IPR004027">
    <property type="entry name" value="SEC_C_motif"/>
</dbReference>
<dbReference type="InterPro" id="IPR000185">
    <property type="entry name" value="SecA"/>
</dbReference>
<dbReference type="InterPro" id="IPR020937">
    <property type="entry name" value="SecA_CS"/>
</dbReference>
<dbReference type="InterPro" id="IPR011115">
    <property type="entry name" value="SecA_DEAD"/>
</dbReference>
<dbReference type="InterPro" id="IPR014018">
    <property type="entry name" value="SecA_motor_DEAD"/>
</dbReference>
<dbReference type="InterPro" id="IPR011130">
    <property type="entry name" value="SecA_preprotein_X-link_dom"/>
</dbReference>
<dbReference type="InterPro" id="IPR044722">
    <property type="entry name" value="SecA_SF2_C"/>
</dbReference>
<dbReference type="InterPro" id="IPR011116">
    <property type="entry name" value="SecA_Wing/Scaffold"/>
</dbReference>
<dbReference type="InterPro" id="IPR036266">
    <property type="entry name" value="SecA_Wing/Scaffold_sf"/>
</dbReference>
<dbReference type="InterPro" id="IPR036670">
    <property type="entry name" value="SecA_X-link_sf"/>
</dbReference>
<dbReference type="NCBIfam" id="NF009538">
    <property type="entry name" value="PRK12904.1"/>
    <property type="match status" value="1"/>
</dbReference>
<dbReference type="NCBIfam" id="TIGR00963">
    <property type="entry name" value="secA"/>
    <property type="match status" value="1"/>
</dbReference>
<dbReference type="PANTHER" id="PTHR30612:SF0">
    <property type="entry name" value="CHLOROPLAST PROTEIN-TRANSPORTING ATPASE"/>
    <property type="match status" value="1"/>
</dbReference>
<dbReference type="PANTHER" id="PTHR30612">
    <property type="entry name" value="SECA INNER MEMBRANE COMPONENT OF SEC PROTEIN SECRETION SYSTEM"/>
    <property type="match status" value="1"/>
</dbReference>
<dbReference type="Pfam" id="PF21090">
    <property type="entry name" value="P-loop_SecA"/>
    <property type="match status" value="1"/>
</dbReference>
<dbReference type="Pfam" id="PF02810">
    <property type="entry name" value="SEC-C"/>
    <property type="match status" value="1"/>
</dbReference>
<dbReference type="Pfam" id="PF07517">
    <property type="entry name" value="SecA_DEAD"/>
    <property type="match status" value="1"/>
</dbReference>
<dbReference type="Pfam" id="PF01043">
    <property type="entry name" value="SecA_PP_bind"/>
    <property type="match status" value="1"/>
</dbReference>
<dbReference type="Pfam" id="PF07516">
    <property type="entry name" value="SecA_SW"/>
    <property type="match status" value="1"/>
</dbReference>
<dbReference type="PRINTS" id="PR00906">
    <property type="entry name" value="SECA"/>
</dbReference>
<dbReference type="SMART" id="SM00957">
    <property type="entry name" value="SecA_DEAD"/>
    <property type="match status" value="1"/>
</dbReference>
<dbReference type="SMART" id="SM00958">
    <property type="entry name" value="SecA_PP_bind"/>
    <property type="match status" value="1"/>
</dbReference>
<dbReference type="SUPFAM" id="SSF81886">
    <property type="entry name" value="Helical scaffold and wing domains of SecA"/>
    <property type="match status" value="1"/>
</dbReference>
<dbReference type="SUPFAM" id="SSF52540">
    <property type="entry name" value="P-loop containing nucleoside triphosphate hydrolases"/>
    <property type="match status" value="2"/>
</dbReference>
<dbReference type="SUPFAM" id="SSF81767">
    <property type="entry name" value="Pre-protein crosslinking domain of SecA"/>
    <property type="match status" value="1"/>
</dbReference>
<dbReference type="PROSITE" id="PS01312">
    <property type="entry name" value="SECA"/>
    <property type="match status" value="1"/>
</dbReference>
<dbReference type="PROSITE" id="PS51196">
    <property type="entry name" value="SECA_MOTOR_DEAD"/>
    <property type="match status" value="1"/>
</dbReference>
<proteinExistence type="inferred from homology"/>
<keyword id="KW-0067">ATP-binding</keyword>
<keyword id="KW-0997">Cell inner membrane</keyword>
<keyword id="KW-1003">Cell membrane</keyword>
<keyword id="KW-0963">Cytoplasm</keyword>
<keyword id="KW-0472">Membrane</keyword>
<keyword id="KW-0479">Metal-binding</keyword>
<keyword id="KW-0547">Nucleotide-binding</keyword>
<keyword id="KW-0653">Protein transport</keyword>
<keyword id="KW-1185">Reference proteome</keyword>
<keyword id="KW-1278">Translocase</keyword>
<keyword id="KW-0811">Translocation</keyword>
<keyword id="KW-0813">Transport</keyword>
<keyword id="KW-0862">Zinc</keyword>
<sequence>MTTGFLQKIFGSRNQRLVKQYQKTVAAINALEPQIEQLTDDQLRAKTTEFRQRVSSGESLDKLLPEAFAVCREASKRVLKMRHFDVQLIGGMVLHYGKIAEMRTGEGKTLVATLPVYLNALSGRGVHVVTVNDYLAQRDAEWMARLYNFLGMSVGINLSQMDHGLKQEAYAADITYGTNNEFGFDYLRDNMVYETDARVQRTLNFAVVDEVDSILIDEARTPLIISGQAEDHTELYVRMNALPPLLDRQIGEEKADGTGVEKPGDYTLDEKARQVFLTESGHEKAERLLAEWGLIGEGESLYAPQNITLMHHVYAALRAHTLFYKDQHYVVQNGEVVIVDEFTGRLMAGRRWSDGLHQAVEAKEHVKIQSENQTLASITFQNYFRMYAKLSGMTGTADTEAYEFNEIYGLETVVIPTNRPPKRIDKQDQIYKTAMERYNAVIRDIRDCYDRGQPVLVGTTSIENSELLSQLLNKAGLPHEVLNAKQHAREAAIVAEAGRPKRITIATNMAGRGTDIVLGGNAEKQAAFIEADLSIPEEEKAPRIQKLHDEWQTLHDQVKAAGGLHIIGTERHESRRIDNQLRGRAGRQGDPGSSRFYLSLEDPLLRIFAGDRVRAIMDRLKMPEGEAIEAGIVTRSIESAQRKVEARNFDIRKQLLEYDDVSNDQRKVIYQQRNELLEAHDITETIGAMRHGVITDIVRQFVPAGSIEEQWDVPELEEALRNDWQLDLAIQEMINESQSIDPDEILEAVLAAADEAYESKVEQVGRESFSAFERSVMLQTLDRSWREHLAALDHLRQGIHLRGYAQKNPKQEYKREAFELFAAMLDSVKLEVTRIVMNVQIQSPEQLEQAAEQMEEQGSHLENVEFRHADYSEGGAAVAAAPVAANAAAAMIGDAMAHGGSAAAPFSGDAVPKVGRNDPCPCGSGKKYKQCHGKIA</sequence>
<protein>
    <recommendedName>
        <fullName evidence="1">Protein translocase subunit SecA</fullName>
        <ecNumber evidence="1">7.4.2.8</ecNumber>
    </recommendedName>
</protein>